<sequence>MADNPIYQKLGQLGQHTVQPASPEEAQLERVENPHSGTLYLTRFVAPEFTSLCPVTGQPDFAHLVIDYAPGPWLVESKSLKLYLTSFRNHGAFHEECTVSIGKKIFDFTEATWLRISGYWYPRGGIPIDVFWQSGDVPKGLYVPDTGVASYRGRG</sequence>
<keyword id="KW-0963">Cytoplasm</keyword>
<keyword id="KW-0521">NADP</keyword>
<keyword id="KW-0560">Oxidoreductase</keyword>
<keyword id="KW-0671">Queuosine biosynthesis</keyword>
<keyword id="KW-1185">Reference proteome</keyword>
<reference key="1">
    <citation type="journal article" date="2006" name="J. Bacteriol.">
        <title>Comparative genomic evidence for a close relationship between the dimorphic prosthecate bacteria Hyphomonas neptunium and Caulobacter crescentus.</title>
        <authorList>
            <person name="Badger J.H."/>
            <person name="Hoover T.R."/>
            <person name="Brun Y.V."/>
            <person name="Weiner R.M."/>
            <person name="Laub M.T."/>
            <person name="Alexandre G."/>
            <person name="Mrazek J."/>
            <person name="Ren Q."/>
            <person name="Paulsen I.T."/>
            <person name="Nelson K.E."/>
            <person name="Khouri H.M."/>
            <person name="Radune D."/>
            <person name="Sosa J."/>
            <person name="Dodson R.J."/>
            <person name="Sullivan S.A."/>
            <person name="Rosovitz M.J."/>
            <person name="Madupu R."/>
            <person name="Brinkac L.M."/>
            <person name="Durkin A.S."/>
            <person name="Daugherty S.C."/>
            <person name="Kothari S.P."/>
            <person name="Giglio M.G."/>
            <person name="Zhou L."/>
            <person name="Haft D.H."/>
            <person name="Selengut J.D."/>
            <person name="Davidsen T.M."/>
            <person name="Yang Q."/>
            <person name="Zafar N."/>
            <person name="Ward N.L."/>
        </authorList>
    </citation>
    <scope>NUCLEOTIDE SEQUENCE [LARGE SCALE GENOMIC DNA]</scope>
    <source>
        <strain>ATCC 15444</strain>
    </source>
</reference>
<organism>
    <name type="scientific">Hyphomonas neptunium (strain ATCC 15444)</name>
    <dbReference type="NCBI Taxonomy" id="228405"/>
    <lineage>
        <taxon>Bacteria</taxon>
        <taxon>Pseudomonadati</taxon>
        <taxon>Pseudomonadota</taxon>
        <taxon>Alphaproteobacteria</taxon>
        <taxon>Hyphomonadales</taxon>
        <taxon>Hyphomonadaceae</taxon>
        <taxon>Hyphomonas</taxon>
    </lineage>
</organism>
<gene>
    <name evidence="1" type="primary">queF</name>
    <name type="ordered locus">HNE_1855</name>
</gene>
<feature type="chain" id="PRO_1000062389" description="NADPH-dependent 7-cyano-7-deazaguanine reductase">
    <location>
        <begin position="1"/>
        <end position="155"/>
    </location>
</feature>
<feature type="active site" description="Thioimide intermediate" evidence="1">
    <location>
        <position position="53"/>
    </location>
</feature>
<feature type="active site" description="Proton donor" evidence="1">
    <location>
        <position position="60"/>
    </location>
</feature>
<feature type="binding site" evidence="1">
    <location>
        <begin position="75"/>
        <end position="77"/>
    </location>
    <ligand>
        <name>substrate</name>
    </ligand>
</feature>
<feature type="binding site" evidence="1">
    <location>
        <begin position="94"/>
        <end position="95"/>
    </location>
    <ligand>
        <name>substrate</name>
    </ligand>
</feature>
<protein>
    <recommendedName>
        <fullName evidence="1">NADPH-dependent 7-cyano-7-deazaguanine reductase</fullName>
        <ecNumber evidence="1">1.7.1.13</ecNumber>
    </recommendedName>
    <alternativeName>
        <fullName evidence="1">7-cyano-7-carbaguanine reductase</fullName>
    </alternativeName>
    <alternativeName>
        <fullName evidence="1">NADPH-dependent nitrile oxidoreductase</fullName>
    </alternativeName>
    <alternativeName>
        <fullName evidence="1">PreQ(0) reductase</fullName>
    </alternativeName>
</protein>
<proteinExistence type="inferred from homology"/>
<accession>Q0C137</accession>
<evidence type="ECO:0000255" key="1">
    <source>
        <dbReference type="HAMAP-Rule" id="MF_00818"/>
    </source>
</evidence>
<comment type="function">
    <text evidence="1">Catalyzes the NADPH-dependent reduction of 7-cyano-7-deazaguanine (preQ0) to 7-aminomethyl-7-deazaguanine (preQ1).</text>
</comment>
<comment type="catalytic activity">
    <reaction evidence="1">
        <text>7-aminomethyl-7-carbaguanine + 2 NADP(+) = 7-cyano-7-deazaguanine + 2 NADPH + 3 H(+)</text>
        <dbReference type="Rhea" id="RHEA:13409"/>
        <dbReference type="ChEBI" id="CHEBI:15378"/>
        <dbReference type="ChEBI" id="CHEBI:45075"/>
        <dbReference type="ChEBI" id="CHEBI:57783"/>
        <dbReference type="ChEBI" id="CHEBI:58349"/>
        <dbReference type="ChEBI" id="CHEBI:58703"/>
        <dbReference type="EC" id="1.7.1.13"/>
    </reaction>
</comment>
<comment type="pathway">
    <text evidence="1">tRNA modification; tRNA-queuosine biosynthesis.</text>
</comment>
<comment type="subcellular location">
    <subcellularLocation>
        <location evidence="1">Cytoplasm</location>
    </subcellularLocation>
</comment>
<comment type="similarity">
    <text evidence="1">Belongs to the GTP cyclohydrolase I family. QueF type 1 subfamily.</text>
</comment>
<dbReference type="EC" id="1.7.1.13" evidence="1"/>
<dbReference type="EMBL" id="CP000158">
    <property type="protein sequence ID" value="ABI77265.1"/>
    <property type="molecule type" value="Genomic_DNA"/>
</dbReference>
<dbReference type="RefSeq" id="WP_011646856.1">
    <property type="nucleotide sequence ID" value="NC_008358.1"/>
</dbReference>
<dbReference type="SMR" id="Q0C137"/>
<dbReference type="STRING" id="228405.HNE_1855"/>
<dbReference type="KEGG" id="hne:HNE_1855"/>
<dbReference type="eggNOG" id="COG0780">
    <property type="taxonomic scope" value="Bacteria"/>
</dbReference>
<dbReference type="HOGENOM" id="CLU_102489_0_1_5"/>
<dbReference type="UniPathway" id="UPA00392"/>
<dbReference type="Proteomes" id="UP000001959">
    <property type="component" value="Chromosome"/>
</dbReference>
<dbReference type="GO" id="GO:0005737">
    <property type="term" value="C:cytoplasm"/>
    <property type="evidence" value="ECO:0007669"/>
    <property type="project" value="UniProtKB-SubCell"/>
</dbReference>
<dbReference type="GO" id="GO:0033739">
    <property type="term" value="F:preQ1 synthase activity"/>
    <property type="evidence" value="ECO:0007669"/>
    <property type="project" value="UniProtKB-UniRule"/>
</dbReference>
<dbReference type="GO" id="GO:0008616">
    <property type="term" value="P:queuosine biosynthetic process"/>
    <property type="evidence" value="ECO:0007669"/>
    <property type="project" value="UniProtKB-UniRule"/>
</dbReference>
<dbReference type="GO" id="GO:0006400">
    <property type="term" value="P:tRNA modification"/>
    <property type="evidence" value="ECO:0007669"/>
    <property type="project" value="UniProtKB-UniRule"/>
</dbReference>
<dbReference type="Gene3D" id="3.30.1130.10">
    <property type="match status" value="1"/>
</dbReference>
<dbReference type="HAMAP" id="MF_00818">
    <property type="entry name" value="QueF_type1"/>
    <property type="match status" value="1"/>
</dbReference>
<dbReference type="InterPro" id="IPR043133">
    <property type="entry name" value="GTP-CH-I_C/QueF"/>
</dbReference>
<dbReference type="InterPro" id="IPR050084">
    <property type="entry name" value="NADPH_dep_7-cyano-7-deazaG_red"/>
</dbReference>
<dbReference type="InterPro" id="IPR029500">
    <property type="entry name" value="QueF"/>
</dbReference>
<dbReference type="InterPro" id="IPR016856">
    <property type="entry name" value="QueF_type1"/>
</dbReference>
<dbReference type="NCBIfam" id="TIGR03139">
    <property type="entry name" value="QueF-II"/>
    <property type="match status" value="1"/>
</dbReference>
<dbReference type="PANTHER" id="PTHR34354">
    <property type="entry name" value="NADPH-DEPENDENT 7-CYANO-7-DEAZAGUANINE REDUCTASE"/>
    <property type="match status" value="1"/>
</dbReference>
<dbReference type="PANTHER" id="PTHR34354:SF1">
    <property type="entry name" value="NADPH-DEPENDENT 7-CYANO-7-DEAZAGUANINE REDUCTASE"/>
    <property type="match status" value="1"/>
</dbReference>
<dbReference type="Pfam" id="PF14489">
    <property type="entry name" value="QueF"/>
    <property type="match status" value="1"/>
</dbReference>
<dbReference type="PIRSF" id="PIRSF027377">
    <property type="entry name" value="Nitrile_oxidored_QueF"/>
    <property type="match status" value="1"/>
</dbReference>
<dbReference type="SUPFAM" id="SSF55620">
    <property type="entry name" value="Tetrahydrobiopterin biosynthesis enzymes-like"/>
    <property type="match status" value="1"/>
</dbReference>
<name>QUEF_HYPNA</name>